<name>YAE1_NEOFI</name>
<comment type="function">
    <text evidence="2">The complex LTO1:YAE1 may function as a target specific adapter that probably recruits apo-RPLI1 to the cytosolic iron-sulfur protein assembly (CIA) complex machinery. May be required for biogenesis of the large ribosomal subunit and initiation of translation.</text>
</comment>
<comment type="subunit">
    <text evidence="2">May form a complex with LTO1.</text>
</comment>
<comment type="subcellular location">
    <subcellularLocation>
        <location evidence="1">Cytoplasm</location>
    </subcellularLocation>
    <subcellularLocation>
        <location evidence="1">Nucleus</location>
    </subcellularLocation>
</comment>
<comment type="similarity">
    <text evidence="4">Belongs to the YAE1 family.</text>
</comment>
<evidence type="ECO:0000250" key="1">
    <source>
        <dbReference type="UniProtKB" id="P47118"/>
    </source>
</evidence>
<evidence type="ECO:0000250" key="2">
    <source>
        <dbReference type="UniProtKB" id="Q9NRH1"/>
    </source>
</evidence>
<evidence type="ECO:0000256" key="3">
    <source>
        <dbReference type="SAM" id="MobiDB-lite"/>
    </source>
</evidence>
<evidence type="ECO:0000305" key="4"/>
<reference key="1">
    <citation type="journal article" date="2008" name="PLoS Genet.">
        <title>Genomic islands in the pathogenic filamentous fungus Aspergillus fumigatus.</title>
        <authorList>
            <person name="Fedorova N.D."/>
            <person name="Khaldi N."/>
            <person name="Joardar V.S."/>
            <person name="Maiti R."/>
            <person name="Amedeo P."/>
            <person name="Anderson M.J."/>
            <person name="Crabtree J."/>
            <person name="Silva J.C."/>
            <person name="Badger J.H."/>
            <person name="Albarraq A."/>
            <person name="Angiuoli S."/>
            <person name="Bussey H."/>
            <person name="Bowyer P."/>
            <person name="Cotty P.J."/>
            <person name="Dyer P.S."/>
            <person name="Egan A."/>
            <person name="Galens K."/>
            <person name="Fraser-Liggett C.M."/>
            <person name="Haas B.J."/>
            <person name="Inman J.M."/>
            <person name="Kent R."/>
            <person name="Lemieux S."/>
            <person name="Malavazi I."/>
            <person name="Orvis J."/>
            <person name="Roemer T."/>
            <person name="Ronning C.M."/>
            <person name="Sundaram J.P."/>
            <person name="Sutton G."/>
            <person name="Turner G."/>
            <person name="Venter J.C."/>
            <person name="White O.R."/>
            <person name="Whitty B.R."/>
            <person name="Youngman P."/>
            <person name="Wolfe K.H."/>
            <person name="Goldman G.H."/>
            <person name="Wortman J.R."/>
            <person name="Jiang B."/>
            <person name="Denning D.W."/>
            <person name="Nierman W.C."/>
        </authorList>
    </citation>
    <scope>NUCLEOTIDE SEQUENCE [LARGE SCALE GENOMIC DNA]</scope>
    <source>
        <strain>ATCC 1020 / DSM 3700 / CBS 544.65 / FGSC A1164 / JCM 1740 / NRRL 181 / WB 181</strain>
    </source>
</reference>
<proteinExistence type="inferred from homology"/>
<keyword id="KW-0963">Cytoplasm</keyword>
<keyword id="KW-0539">Nucleus</keyword>
<keyword id="KW-1185">Reference proteome</keyword>
<protein>
    <recommendedName>
        <fullName>Protein yae1</fullName>
    </recommendedName>
</protein>
<feature type="chain" id="PRO_0000324430" description="Protein yae1">
    <location>
        <begin position="1"/>
        <end position="213"/>
    </location>
</feature>
<feature type="region of interest" description="Disordered" evidence="3">
    <location>
        <begin position="1"/>
        <end position="42"/>
    </location>
</feature>
<feature type="region of interest" description="deca-GX3 motif; required for interaction with LTO1" evidence="1">
    <location>
        <begin position="49"/>
        <end position="89"/>
    </location>
</feature>
<feature type="region of interest" description="Disordered" evidence="3">
    <location>
        <begin position="194"/>
        <end position="213"/>
    </location>
</feature>
<dbReference type="EMBL" id="DS027690">
    <property type="protein sequence ID" value="EAW21822.1"/>
    <property type="molecule type" value="Genomic_DNA"/>
</dbReference>
<dbReference type="RefSeq" id="XP_001263719.1">
    <property type="nucleotide sequence ID" value="XM_001263718.1"/>
</dbReference>
<dbReference type="STRING" id="331117.A1D7X8"/>
<dbReference type="EnsemblFungi" id="EAW21822">
    <property type="protein sequence ID" value="EAW21822"/>
    <property type="gene ID" value="NFIA_069930"/>
</dbReference>
<dbReference type="GeneID" id="4590365"/>
<dbReference type="KEGG" id="nfi:NFIA_069930"/>
<dbReference type="VEuPathDB" id="FungiDB:NFIA_069930"/>
<dbReference type="eggNOG" id="KOG4774">
    <property type="taxonomic scope" value="Eukaryota"/>
</dbReference>
<dbReference type="HOGENOM" id="CLU_066684_0_1_1"/>
<dbReference type="OMA" id="AHVQEGF"/>
<dbReference type="OrthoDB" id="20086at2759"/>
<dbReference type="Proteomes" id="UP000006702">
    <property type="component" value="Unassembled WGS sequence"/>
</dbReference>
<dbReference type="GO" id="GO:0005737">
    <property type="term" value="C:cytoplasm"/>
    <property type="evidence" value="ECO:0007669"/>
    <property type="project" value="UniProtKB-SubCell"/>
</dbReference>
<dbReference type="GO" id="GO:0005634">
    <property type="term" value="C:nucleus"/>
    <property type="evidence" value="ECO:0007669"/>
    <property type="project" value="UniProtKB-SubCell"/>
</dbReference>
<dbReference type="GO" id="GO:0051604">
    <property type="term" value="P:protein maturation"/>
    <property type="evidence" value="ECO:0000250"/>
    <property type="project" value="UniProtKB"/>
</dbReference>
<dbReference type="InterPro" id="IPR019191">
    <property type="entry name" value="Essential_protein_Yae1_N"/>
</dbReference>
<dbReference type="InterPro" id="IPR038881">
    <property type="entry name" value="Yae1-like"/>
</dbReference>
<dbReference type="PANTHER" id="PTHR18829">
    <property type="entry name" value="PROTEIN YAE1 HOMOLOG"/>
    <property type="match status" value="1"/>
</dbReference>
<dbReference type="PANTHER" id="PTHR18829:SF0">
    <property type="entry name" value="PROTEIN YAE1 HOMOLOG"/>
    <property type="match status" value="1"/>
</dbReference>
<dbReference type="Pfam" id="PF09811">
    <property type="entry name" value="Yae1_N"/>
    <property type="match status" value="1"/>
</dbReference>
<sequence length="213" mass="23594">MTSPQTSSLDDIFGSSPPHEDEKFSQRPSIQAPEPSDLPSLRRQHVTAGYRDGVSAAKGEHVQHGFDAGFPIGAQLGMRAGTVIGIIEGLLRGFENRTASRAVKKPLQWKEEGQGTEADEAEAARQAKREQLLRLYQKAVKELEVRSVFAGSEEGSTRDNEGQEKPEVVLRRKGDAVISQWEEQVRVAQWEENMAALEPKEDEQRASTSTEQI</sequence>
<organism>
    <name type="scientific">Neosartorya fischeri (strain ATCC 1020 / DSM 3700 / CBS 544.65 / FGSC A1164 / JCM 1740 / NRRL 181 / WB 181)</name>
    <name type="common">Aspergillus fischerianus</name>
    <dbReference type="NCBI Taxonomy" id="331117"/>
    <lineage>
        <taxon>Eukaryota</taxon>
        <taxon>Fungi</taxon>
        <taxon>Dikarya</taxon>
        <taxon>Ascomycota</taxon>
        <taxon>Pezizomycotina</taxon>
        <taxon>Eurotiomycetes</taxon>
        <taxon>Eurotiomycetidae</taxon>
        <taxon>Eurotiales</taxon>
        <taxon>Aspergillaceae</taxon>
        <taxon>Aspergillus</taxon>
        <taxon>Aspergillus subgen. Fumigati</taxon>
    </lineage>
</organism>
<accession>A1D7X8</accession>
<gene>
    <name type="primary">yae1</name>
    <name type="ORF">NFIA_069930</name>
</gene>